<reference key="1">
    <citation type="journal article" date="2011" name="Proc. Natl. Acad. Sci. U.S.A.">
        <title>Genomic anatomy of Escherichia coli O157:H7 outbreaks.</title>
        <authorList>
            <person name="Eppinger M."/>
            <person name="Mammel M.K."/>
            <person name="Leclerc J.E."/>
            <person name="Ravel J."/>
            <person name="Cebula T.A."/>
        </authorList>
    </citation>
    <scope>NUCLEOTIDE SEQUENCE [LARGE SCALE GENOMIC DNA]</scope>
    <source>
        <strain>EC4115 / EHEC</strain>
    </source>
</reference>
<gene>
    <name evidence="1" type="primary">patA</name>
    <name type="ordered locus">ECH74115_4387</name>
</gene>
<organism>
    <name type="scientific">Escherichia coli O157:H7 (strain EC4115 / EHEC)</name>
    <dbReference type="NCBI Taxonomy" id="444450"/>
    <lineage>
        <taxon>Bacteria</taxon>
        <taxon>Pseudomonadati</taxon>
        <taxon>Pseudomonadota</taxon>
        <taxon>Gammaproteobacteria</taxon>
        <taxon>Enterobacterales</taxon>
        <taxon>Enterobacteriaceae</taxon>
        <taxon>Escherichia</taxon>
    </lineage>
</organism>
<protein>
    <recommendedName>
        <fullName evidence="1">Putrescine aminotransferase</fullName>
        <shortName evidence="1">PAT</shortName>
        <shortName evidence="1">PATase</shortName>
        <ecNumber evidence="1">2.6.1.82</ecNumber>
    </recommendedName>
    <alternativeName>
        <fullName evidence="1">Cadaverine transaminase</fullName>
    </alternativeName>
    <alternativeName>
        <fullName evidence="1">Diamine transaminase</fullName>
        <ecNumber evidence="1">2.6.1.29</ecNumber>
    </alternativeName>
    <alternativeName>
        <fullName evidence="1">Putrescine transaminase</fullName>
    </alternativeName>
    <alternativeName>
        <fullName evidence="1">Putrescine--2-oxoglutaric acid transaminase</fullName>
    </alternativeName>
</protein>
<accession>B5YRB3</accession>
<sequence>MNRLPSSASALACSAHALNLIEKRTLDHEEMKALNREVIEYFKEHVNPGFLEYRKSVTAGGDYGAVEWQAGGLNTLVDTQGQEFIDCLGGFGIFNVGHRNPVVVSAVQNQLAKQPLHSQELLDPLRAMLAKTLAALTPGKLKYSFFCNSGTESVEAALKLAKAYQSPRGKFTFIATSGAFHGKSLGALSATAKSTFRKPFMPLLPGFRHVPFGNIEAMRTALNECKKTGDDVAAVILEPIQGEGGVILPPPGYLTAVRKLCDEFGALMILDEVQTGMGRTGKMFACEHENVQPDILCLAKALGGGVMPIGATIATEEVFSVLFDNPFLHTTTFGGNPLACAAALATINVLLEQNLPAQAEQKGDMLLDGFRQLAREYPDLVQEARGKGMLMAIEFVDNEIGYNFASEMFRQRVLVAGTLNNAKTIRIEPPLTLTIEQCELVIKAARKALAAMRVSVEEA</sequence>
<comment type="function">
    <text evidence="1">Catalyzes the aminotransferase reaction from putrescine to 2-oxoglutarate, leading to glutamate and 4-aminobutanal, which spontaneously cyclizes to form 1-pyrroline. This is the first step in one of two pathways for putrescine degradation, where putrescine is converted into 4-aminobutanoate (gamma-aminobutyrate or GABA) via 4-aminobutanal. Also functions as a cadaverine transaminase in a a L-lysine degradation pathway to succinate that proceeds via cadaverine, glutarate and L-2-hydroxyglutarate.</text>
</comment>
<comment type="catalytic activity">
    <reaction evidence="1">
        <text>an alkane-alpha,omega-diamine + 2-oxoglutarate = an omega-aminoaldehyde + L-glutamate</text>
        <dbReference type="Rhea" id="RHEA:18217"/>
        <dbReference type="Rhea" id="RHEA-COMP:9766"/>
        <dbReference type="Rhea" id="RHEA-COMP:12750"/>
        <dbReference type="ChEBI" id="CHEBI:16810"/>
        <dbReference type="ChEBI" id="CHEBI:29985"/>
        <dbReference type="ChEBI" id="CHEBI:70977"/>
        <dbReference type="ChEBI" id="CHEBI:133427"/>
        <dbReference type="EC" id="2.6.1.29"/>
    </reaction>
    <physiologicalReaction direction="left-to-right" evidence="1">
        <dbReference type="Rhea" id="RHEA:18218"/>
    </physiologicalReaction>
</comment>
<comment type="catalytic activity">
    <reaction evidence="1">
        <text>putrescine + 2-oxoglutarate = 1-pyrroline + L-glutamate + H2O</text>
        <dbReference type="Rhea" id="RHEA:12268"/>
        <dbReference type="ChEBI" id="CHEBI:15377"/>
        <dbReference type="ChEBI" id="CHEBI:16810"/>
        <dbReference type="ChEBI" id="CHEBI:29985"/>
        <dbReference type="ChEBI" id="CHEBI:36781"/>
        <dbReference type="ChEBI" id="CHEBI:326268"/>
        <dbReference type="EC" id="2.6.1.82"/>
    </reaction>
    <physiologicalReaction direction="left-to-right" evidence="1">
        <dbReference type="Rhea" id="RHEA:12269"/>
    </physiologicalReaction>
</comment>
<comment type="catalytic activity">
    <reaction evidence="1">
        <text>cadaverine + 2-oxoglutarate = 5-aminopentanal + L-glutamate</text>
        <dbReference type="Rhea" id="RHEA:61624"/>
        <dbReference type="ChEBI" id="CHEBI:16810"/>
        <dbReference type="ChEBI" id="CHEBI:29985"/>
        <dbReference type="ChEBI" id="CHEBI:58384"/>
        <dbReference type="ChEBI" id="CHEBI:144896"/>
    </reaction>
    <physiologicalReaction direction="left-to-right" evidence="1">
        <dbReference type="Rhea" id="RHEA:61625"/>
    </physiologicalReaction>
</comment>
<comment type="cofactor">
    <cofactor evidence="1">
        <name>pyridoxal 5'-phosphate</name>
        <dbReference type="ChEBI" id="CHEBI:597326"/>
    </cofactor>
</comment>
<comment type="pathway">
    <text evidence="1">Amine and polyamine degradation; putrescine degradation; 4-aminobutanal from putrescine (transaminase route): step 1/1.</text>
</comment>
<comment type="similarity">
    <text evidence="1">Belongs to the class-III pyridoxal-phosphate-dependent aminotransferase family. Putrescine aminotransferase subfamily.</text>
</comment>
<evidence type="ECO:0000255" key="1">
    <source>
        <dbReference type="HAMAP-Rule" id="MF_01276"/>
    </source>
</evidence>
<dbReference type="EC" id="2.6.1.82" evidence="1"/>
<dbReference type="EC" id="2.6.1.29" evidence="1"/>
<dbReference type="EMBL" id="CP001164">
    <property type="protein sequence ID" value="ACI36066.1"/>
    <property type="molecule type" value="Genomic_DNA"/>
</dbReference>
<dbReference type="SMR" id="B5YRB3"/>
<dbReference type="KEGG" id="ecf:ECH74115_4387"/>
<dbReference type="HOGENOM" id="CLU_016922_10_0_6"/>
<dbReference type="UniPathway" id="UPA00188">
    <property type="reaction ID" value="UER00290"/>
</dbReference>
<dbReference type="GO" id="GO:0019161">
    <property type="term" value="F:diamine transaminase activity"/>
    <property type="evidence" value="ECO:0007669"/>
    <property type="project" value="UniProtKB-EC"/>
</dbReference>
<dbReference type="GO" id="GO:0042802">
    <property type="term" value="F:identical protein binding"/>
    <property type="evidence" value="ECO:0007669"/>
    <property type="project" value="TreeGrafter"/>
</dbReference>
<dbReference type="GO" id="GO:0033094">
    <property type="term" value="F:putrescine--2-oxoglutarate transaminase activity"/>
    <property type="evidence" value="ECO:0007669"/>
    <property type="project" value="UniProtKB-UniRule"/>
</dbReference>
<dbReference type="GO" id="GO:0030170">
    <property type="term" value="F:pyridoxal phosphate binding"/>
    <property type="evidence" value="ECO:0007669"/>
    <property type="project" value="UniProtKB-UniRule"/>
</dbReference>
<dbReference type="GO" id="GO:0019477">
    <property type="term" value="P:L-lysine catabolic process"/>
    <property type="evidence" value="ECO:0007669"/>
    <property type="project" value="UniProtKB-UniRule"/>
</dbReference>
<dbReference type="GO" id="GO:0009447">
    <property type="term" value="P:putrescine catabolic process"/>
    <property type="evidence" value="ECO:0007669"/>
    <property type="project" value="UniProtKB-UniRule"/>
</dbReference>
<dbReference type="CDD" id="cd00610">
    <property type="entry name" value="OAT_like"/>
    <property type="match status" value="1"/>
</dbReference>
<dbReference type="FunFam" id="3.40.640.10:FF:000004">
    <property type="entry name" value="Acetylornithine aminotransferase"/>
    <property type="match status" value="1"/>
</dbReference>
<dbReference type="Gene3D" id="3.90.1150.10">
    <property type="entry name" value="Aspartate Aminotransferase, domain 1"/>
    <property type="match status" value="1"/>
</dbReference>
<dbReference type="Gene3D" id="3.40.640.10">
    <property type="entry name" value="Type I PLP-dependent aspartate aminotransferase-like (Major domain)"/>
    <property type="match status" value="1"/>
</dbReference>
<dbReference type="HAMAP" id="MF_01276">
    <property type="entry name" value="Putres_aminotrans_3"/>
    <property type="match status" value="1"/>
</dbReference>
<dbReference type="InterPro" id="IPR005814">
    <property type="entry name" value="Aminotrans_3"/>
</dbReference>
<dbReference type="InterPro" id="IPR049704">
    <property type="entry name" value="Aminotrans_3_PPA_site"/>
</dbReference>
<dbReference type="InterPro" id="IPR050103">
    <property type="entry name" value="Class-III_PLP-dep_AT"/>
</dbReference>
<dbReference type="InterPro" id="IPR017747">
    <property type="entry name" value="Putrescine_aminotransferase"/>
</dbReference>
<dbReference type="InterPro" id="IPR015424">
    <property type="entry name" value="PyrdxlP-dep_Trfase"/>
</dbReference>
<dbReference type="InterPro" id="IPR015421">
    <property type="entry name" value="PyrdxlP-dep_Trfase_major"/>
</dbReference>
<dbReference type="InterPro" id="IPR015422">
    <property type="entry name" value="PyrdxlP-dep_Trfase_small"/>
</dbReference>
<dbReference type="NCBIfam" id="NF008570">
    <property type="entry name" value="PRK11522.1"/>
    <property type="match status" value="1"/>
</dbReference>
<dbReference type="NCBIfam" id="TIGR03372">
    <property type="entry name" value="putres_am_tran"/>
    <property type="match status" value="1"/>
</dbReference>
<dbReference type="PANTHER" id="PTHR11986">
    <property type="entry name" value="AMINOTRANSFERASE CLASS III"/>
    <property type="match status" value="1"/>
</dbReference>
<dbReference type="PANTHER" id="PTHR11986:SF112">
    <property type="entry name" value="PUTRESCINE AMINOTRANSFERASE"/>
    <property type="match status" value="1"/>
</dbReference>
<dbReference type="Pfam" id="PF00202">
    <property type="entry name" value="Aminotran_3"/>
    <property type="match status" value="1"/>
</dbReference>
<dbReference type="PIRSF" id="PIRSF000521">
    <property type="entry name" value="Transaminase_4ab_Lys_Orn"/>
    <property type="match status" value="1"/>
</dbReference>
<dbReference type="SUPFAM" id="SSF53383">
    <property type="entry name" value="PLP-dependent transferases"/>
    <property type="match status" value="1"/>
</dbReference>
<dbReference type="PROSITE" id="PS00600">
    <property type="entry name" value="AA_TRANSFER_CLASS_3"/>
    <property type="match status" value="1"/>
</dbReference>
<proteinExistence type="inferred from homology"/>
<feature type="chain" id="PRO_1000140276" description="Putrescine aminotransferase">
    <location>
        <begin position="1"/>
        <end position="459"/>
    </location>
</feature>
<feature type="binding site" description="in other chain" evidence="1">
    <location>
        <begin position="150"/>
        <end position="151"/>
    </location>
    <ligand>
        <name>pyridoxal 5'-phosphate</name>
        <dbReference type="ChEBI" id="CHEBI:597326"/>
        <note>ligand shared between dimeric partners</note>
    </ligand>
</feature>
<feature type="binding site" description="in other chain" evidence="1">
    <location>
        <position position="274"/>
    </location>
    <ligand>
        <name>pyridoxal 5'-phosphate</name>
        <dbReference type="ChEBI" id="CHEBI:597326"/>
        <note>ligand shared between dimeric partners</note>
    </ligand>
</feature>
<feature type="binding site" evidence="1">
    <location>
        <position position="332"/>
    </location>
    <ligand>
        <name>pyridoxal 5'-phosphate</name>
        <dbReference type="ChEBI" id="CHEBI:597326"/>
        <note>ligand shared between dimeric partners</note>
    </ligand>
</feature>
<feature type="modified residue" description="N6-(pyridoxal phosphate)lysine" evidence="1">
    <location>
        <position position="300"/>
    </location>
</feature>
<keyword id="KW-0032">Aminotransferase</keyword>
<keyword id="KW-0663">Pyridoxal phosphate</keyword>
<keyword id="KW-0808">Transferase</keyword>
<name>PAT_ECO5E</name>